<keyword id="KW-0150">Chloroplast</keyword>
<keyword id="KW-0460">Magnesium</keyword>
<keyword id="KW-0479">Metal-binding</keyword>
<keyword id="KW-0934">Plastid</keyword>
<keyword id="KW-1185">Reference proteome</keyword>
<keyword id="KW-0808">Transferase</keyword>
<keyword id="KW-0809">Transit peptide</keyword>
<name>CPT4_SOLLC</name>
<reference key="1">
    <citation type="journal article" date="2013" name="Plant J.">
        <title>The tomato cis-prenyltransferase gene family.</title>
        <authorList>
            <person name="Akhtar T.A."/>
            <person name="Matsuba Y."/>
            <person name="Schauvinhold I."/>
            <person name="Yu G."/>
            <person name="Lees H.A."/>
            <person name="Klein S.E."/>
            <person name="Pichersky E."/>
        </authorList>
    </citation>
    <scope>NUCLEOTIDE SEQUENCE [GENOMIC DNA]</scope>
    <scope>FUNCTION</scope>
    <scope>COFACTOR</scope>
    <scope>SUBCELLULAR LOCATION</scope>
    <scope>TISSUE SPECIFICITY</scope>
</reference>
<reference key="2">
    <citation type="journal article" date="2012" name="Nature">
        <title>The tomato genome sequence provides insights into fleshy fruit evolution.</title>
        <authorList>
            <consortium name="Tomato Genome Consortium"/>
        </authorList>
    </citation>
    <scope>NUCLEOTIDE SEQUENCE [LARGE SCALE GENOMIC DNA]</scope>
    <source>
        <strain>cv. Heinz 1706</strain>
    </source>
</reference>
<gene>
    <name evidence="4" type="primary">CPT4</name>
    <name evidence="5" type="ordered locus">Solyc10g085150</name>
</gene>
<accession>K4D3U9</accession>
<accession>A0A3Q7IMH9</accession>
<protein>
    <recommendedName>
        <fullName evidence="4">Cis-prenyltransferase 4, chloroplastic</fullName>
        <shortName evidence="4">SlCPT4</shortName>
        <ecNumber evidence="6">2.5.1.-</ecNumber>
    </recommendedName>
</protein>
<evidence type="ECO:0000250" key="1">
    <source>
        <dbReference type="UniProtKB" id="P60472"/>
    </source>
</evidence>
<evidence type="ECO:0000255" key="2"/>
<evidence type="ECO:0000269" key="3">
    <source>
    </source>
</evidence>
<evidence type="ECO:0000303" key="4">
    <source>
    </source>
</evidence>
<evidence type="ECO:0000305" key="5"/>
<evidence type="ECO:0000305" key="6">
    <source>
    </source>
</evidence>
<sequence>MAFSLQLQQIFVSYTRFCSQPKSITNPLISLKLPSIHPLAFAQNAAVSNIDTGVAAIDGSAEEVSLPPQLRRELMPKHVALIMDGNRRWAKMRGLPVALGYEAGIRAVRKIIELCGNWGIMVLTLFAFSSDNWLRPKVEVDILMSLFERALNDELENFAREGIRISIIGDSSKLPKSLQDLIAKAVKTTKENSRLHLVVAVNYSGQHDVVQACQTIAQKVKDDIIETKDINSFLIEQELQTNCIDFPCPDLLIRTSGELRLSNFLLWQLAYSELFFSHSHWPDFGEAEFLEALCSFQQRQRRYGRQSS</sequence>
<comment type="function">
    <text evidence="3">Uses neryl diphosphate and geranyl diphosphate to catalyze the cis-prenyl chain elongation and produce polyprenyl diphosphate with a chain of 55 carbons.</text>
</comment>
<comment type="cofactor">
    <cofactor evidence="3">
        <name>Mg(2+)</name>
        <dbReference type="ChEBI" id="CHEBI:18420"/>
    </cofactor>
</comment>
<comment type="subcellular location">
    <subcellularLocation>
        <location evidence="3">Plastid</location>
        <location evidence="3">Chloroplast</location>
    </subcellularLocation>
    <text evidence="3">Localizes in punctuate patterns inside the chloroplasts.</text>
</comment>
<comment type="tissue specificity">
    <text evidence="3">Widely expressed.</text>
</comment>
<comment type="similarity">
    <text evidence="5">Belongs to the UPP synthase family.</text>
</comment>
<feature type="transit peptide" description="Chloroplast" evidence="2">
    <location>
        <begin position="1"/>
        <end position="45"/>
    </location>
</feature>
<feature type="chain" id="PRO_0000450935" description="Cis-prenyltransferase 4, chloroplastic">
    <location>
        <begin position="46"/>
        <end position="308"/>
    </location>
</feature>
<feature type="active site" evidence="1">
    <location>
        <position position="84"/>
    </location>
</feature>
<organism>
    <name type="scientific">Solanum lycopersicum</name>
    <name type="common">Tomato</name>
    <name type="synonym">Lycopersicon esculentum</name>
    <dbReference type="NCBI Taxonomy" id="4081"/>
    <lineage>
        <taxon>Eukaryota</taxon>
        <taxon>Viridiplantae</taxon>
        <taxon>Streptophyta</taxon>
        <taxon>Embryophyta</taxon>
        <taxon>Tracheophyta</taxon>
        <taxon>Spermatophyta</taxon>
        <taxon>Magnoliopsida</taxon>
        <taxon>eudicotyledons</taxon>
        <taxon>Gunneridae</taxon>
        <taxon>Pentapetalae</taxon>
        <taxon>asterids</taxon>
        <taxon>lamiids</taxon>
        <taxon>Solanales</taxon>
        <taxon>Solanaceae</taxon>
        <taxon>Solanoideae</taxon>
        <taxon>Solaneae</taxon>
        <taxon>Solanum</taxon>
        <taxon>Solanum subgen. Lycopersicon</taxon>
    </lineage>
</organism>
<proteinExistence type="evidence at transcript level"/>
<dbReference type="EC" id="2.5.1.-" evidence="6"/>
<dbReference type="EMBL" id="JX943886">
    <property type="protein sequence ID" value="AFW98428.1"/>
    <property type="molecule type" value="Genomic_DNA"/>
</dbReference>
<dbReference type="EMBL" id="CM001073">
    <property type="status" value="NOT_ANNOTATED_CDS"/>
    <property type="molecule type" value="Genomic_DNA"/>
</dbReference>
<dbReference type="RefSeq" id="NP_001304726.1">
    <property type="nucleotide sequence ID" value="NM_001317797.1"/>
</dbReference>
<dbReference type="SMR" id="K4D3U9"/>
<dbReference type="FunCoup" id="K4D3U9">
    <property type="interactions" value="12"/>
</dbReference>
<dbReference type="STRING" id="4081.A0A3Q7IMH9"/>
<dbReference type="PaxDb" id="4081-Solyc10g085150.1.1"/>
<dbReference type="GeneID" id="101244138"/>
<dbReference type="KEGG" id="sly:101244138"/>
<dbReference type="eggNOG" id="KOG1602">
    <property type="taxonomic scope" value="Eukaryota"/>
</dbReference>
<dbReference type="HOGENOM" id="CLU_038505_1_0_1"/>
<dbReference type="InParanoid" id="K4D3U9"/>
<dbReference type="OrthoDB" id="4173905at2759"/>
<dbReference type="PhylomeDB" id="K4D3U9"/>
<dbReference type="Proteomes" id="UP000004994">
    <property type="component" value="Chromosome 10"/>
</dbReference>
<dbReference type="ExpressionAtlas" id="K4D3U9">
    <property type="expression patterns" value="baseline and differential"/>
</dbReference>
<dbReference type="GO" id="GO:0009507">
    <property type="term" value="C:chloroplast"/>
    <property type="evidence" value="ECO:0000314"/>
    <property type="project" value="UniProtKB"/>
</dbReference>
<dbReference type="GO" id="GO:0009570">
    <property type="term" value="C:chloroplast stroma"/>
    <property type="evidence" value="ECO:0000318"/>
    <property type="project" value="GO_Central"/>
</dbReference>
<dbReference type="GO" id="GO:0000287">
    <property type="term" value="F:magnesium ion binding"/>
    <property type="evidence" value="ECO:0000314"/>
    <property type="project" value="UniProtKB"/>
</dbReference>
<dbReference type="GO" id="GO:0004659">
    <property type="term" value="F:prenyltransferase activity"/>
    <property type="evidence" value="ECO:0000314"/>
    <property type="project" value="UniProtKB"/>
</dbReference>
<dbReference type="GO" id="GO:0009668">
    <property type="term" value="P:plastid membrane organization"/>
    <property type="evidence" value="ECO:0000318"/>
    <property type="project" value="GO_Central"/>
</dbReference>
<dbReference type="GO" id="GO:0016094">
    <property type="term" value="P:polyprenol biosynthetic process"/>
    <property type="evidence" value="ECO:0000318"/>
    <property type="project" value="GO_Central"/>
</dbReference>
<dbReference type="GO" id="GO:0009409">
    <property type="term" value="P:response to cold"/>
    <property type="evidence" value="ECO:0000318"/>
    <property type="project" value="GO_Central"/>
</dbReference>
<dbReference type="CDD" id="cd00475">
    <property type="entry name" value="Cis_IPPS"/>
    <property type="match status" value="1"/>
</dbReference>
<dbReference type="FunFam" id="3.40.1180.10:FF:000001">
    <property type="entry name" value="(2E,6E)-farnesyl-diphosphate-specific ditrans,polycis-undecaprenyl-diphosphate synthase"/>
    <property type="match status" value="1"/>
</dbReference>
<dbReference type="Gene3D" id="3.40.1180.10">
    <property type="entry name" value="Decaprenyl diphosphate synthase-like"/>
    <property type="match status" value="1"/>
</dbReference>
<dbReference type="HAMAP" id="MF_01139">
    <property type="entry name" value="ISPT"/>
    <property type="match status" value="1"/>
</dbReference>
<dbReference type="InterPro" id="IPR001441">
    <property type="entry name" value="UPP_synth-like"/>
</dbReference>
<dbReference type="InterPro" id="IPR018520">
    <property type="entry name" value="UPP_synth-like_CS"/>
</dbReference>
<dbReference type="InterPro" id="IPR036424">
    <property type="entry name" value="UPP_synth-like_sf"/>
</dbReference>
<dbReference type="NCBIfam" id="TIGR00055">
    <property type="entry name" value="uppS"/>
    <property type="match status" value="1"/>
</dbReference>
<dbReference type="PANTHER" id="PTHR10291:SF46">
    <property type="entry name" value="CIS-PRENYLTRANSFERASE 4, CHLOROPLASTIC"/>
    <property type="match status" value="1"/>
</dbReference>
<dbReference type="PANTHER" id="PTHR10291">
    <property type="entry name" value="DEHYDRODOLICHYL DIPHOSPHATE SYNTHASE FAMILY MEMBER"/>
    <property type="match status" value="1"/>
</dbReference>
<dbReference type="Pfam" id="PF01255">
    <property type="entry name" value="Prenyltransf"/>
    <property type="match status" value="1"/>
</dbReference>
<dbReference type="SUPFAM" id="SSF64005">
    <property type="entry name" value="Undecaprenyl diphosphate synthase"/>
    <property type="match status" value="1"/>
</dbReference>
<dbReference type="PROSITE" id="PS01066">
    <property type="entry name" value="UPP_SYNTHASE"/>
    <property type="match status" value="1"/>
</dbReference>